<reference key="1">
    <citation type="journal article" date="2005" name="Proc. Natl. Acad. Sci. U.S.A.">
        <title>Genome analysis of multiple pathogenic isolates of Streptococcus agalactiae: implications for the microbial 'pan-genome'.</title>
        <authorList>
            <person name="Tettelin H."/>
            <person name="Masignani V."/>
            <person name="Cieslewicz M.J."/>
            <person name="Donati C."/>
            <person name="Medini D."/>
            <person name="Ward N.L."/>
            <person name="Angiuoli S.V."/>
            <person name="Crabtree J."/>
            <person name="Jones A.L."/>
            <person name="Durkin A.S."/>
            <person name="DeBoy R.T."/>
            <person name="Davidsen T.M."/>
            <person name="Mora M."/>
            <person name="Scarselli M."/>
            <person name="Margarit y Ros I."/>
            <person name="Peterson J.D."/>
            <person name="Hauser C.R."/>
            <person name="Sundaram J.P."/>
            <person name="Nelson W.C."/>
            <person name="Madupu R."/>
            <person name="Brinkac L.M."/>
            <person name="Dodson R.J."/>
            <person name="Rosovitz M.J."/>
            <person name="Sullivan S.A."/>
            <person name="Daugherty S.C."/>
            <person name="Haft D.H."/>
            <person name="Selengut J."/>
            <person name="Gwinn M.L."/>
            <person name="Zhou L."/>
            <person name="Zafar N."/>
            <person name="Khouri H."/>
            <person name="Radune D."/>
            <person name="Dimitrov G."/>
            <person name="Watkins K."/>
            <person name="O'Connor K.J."/>
            <person name="Smith S."/>
            <person name="Utterback T.R."/>
            <person name="White O."/>
            <person name="Rubens C.E."/>
            <person name="Grandi G."/>
            <person name="Madoff L.C."/>
            <person name="Kasper D.L."/>
            <person name="Telford J.L."/>
            <person name="Wessels M.R."/>
            <person name="Rappuoli R."/>
            <person name="Fraser C.M."/>
        </authorList>
    </citation>
    <scope>NUCLEOTIDE SEQUENCE [LARGE SCALE GENOMIC DNA]</scope>
    <source>
        <strain>ATCC 27591 / A909 / CDC SS700</strain>
    </source>
</reference>
<protein>
    <recommendedName>
        <fullName evidence="1">Segregation and condensation protein A</fullName>
    </recommendedName>
</protein>
<comment type="function">
    <text evidence="1">Participates in chromosomal partition during cell division. May act via the formation of a condensin-like complex containing Smc and ScpB that pull DNA away from mid-cell into both cell halves.</text>
</comment>
<comment type="subunit">
    <text evidence="1">Component of a cohesin-like complex composed of ScpA, ScpB and the Smc homodimer, in which ScpA and ScpB bind to the head domain of Smc. The presence of the three proteins is required for the association of the complex with DNA.</text>
</comment>
<comment type="subcellular location">
    <subcellularLocation>
        <location evidence="1">Cytoplasm</location>
    </subcellularLocation>
    <text evidence="1">Associated with two foci at the outer edges of the nucleoid region in young cells, and at four foci within both cell halves in older cells.</text>
</comment>
<comment type="similarity">
    <text evidence="1">Belongs to the ScpA family.</text>
</comment>
<organism>
    <name type="scientific">Streptococcus agalactiae serotype Ia (strain ATCC 27591 / A909 / CDC SS700)</name>
    <dbReference type="NCBI Taxonomy" id="205921"/>
    <lineage>
        <taxon>Bacteria</taxon>
        <taxon>Bacillati</taxon>
        <taxon>Bacillota</taxon>
        <taxon>Bacilli</taxon>
        <taxon>Lactobacillales</taxon>
        <taxon>Streptococcaceae</taxon>
        <taxon>Streptococcus</taxon>
    </lineage>
</organism>
<name>SCPA_STRA1</name>
<dbReference type="EMBL" id="CP000114">
    <property type="protein sequence ID" value="ABA45695.1"/>
    <property type="molecule type" value="Genomic_DNA"/>
</dbReference>
<dbReference type="RefSeq" id="WP_000351869.1">
    <property type="nucleotide sequence ID" value="NC_007432.1"/>
</dbReference>
<dbReference type="SMR" id="Q3JZU0"/>
<dbReference type="KEGG" id="sak:SAK_1610"/>
<dbReference type="HOGENOM" id="CLU_038686_3_3_9"/>
<dbReference type="GO" id="GO:0005737">
    <property type="term" value="C:cytoplasm"/>
    <property type="evidence" value="ECO:0007669"/>
    <property type="project" value="UniProtKB-SubCell"/>
</dbReference>
<dbReference type="GO" id="GO:0051301">
    <property type="term" value="P:cell division"/>
    <property type="evidence" value="ECO:0007669"/>
    <property type="project" value="UniProtKB-KW"/>
</dbReference>
<dbReference type="GO" id="GO:0007059">
    <property type="term" value="P:chromosome segregation"/>
    <property type="evidence" value="ECO:0007669"/>
    <property type="project" value="UniProtKB-UniRule"/>
</dbReference>
<dbReference type="GO" id="GO:0006260">
    <property type="term" value="P:DNA replication"/>
    <property type="evidence" value="ECO:0007669"/>
    <property type="project" value="UniProtKB-UniRule"/>
</dbReference>
<dbReference type="Gene3D" id="6.10.250.2410">
    <property type="match status" value="1"/>
</dbReference>
<dbReference type="HAMAP" id="MF_01805">
    <property type="entry name" value="ScpA"/>
    <property type="match status" value="1"/>
</dbReference>
<dbReference type="InterPro" id="IPR003768">
    <property type="entry name" value="ScpA"/>
</dbReference>
<dbReference type="NCBIfam" id="NF000993">
    <property type="entry name" value="PRK00104.1-2"/>
    <property type="match status" value="1"/>
</dbReference>
<dbReference type="PANTHER" id="PTHR33969">
    <property type="entry name" value="SEGREGATION AND CONDENSATION PROTEIN A"/>
    <property type="match status" value="1"/>
</dbReference>
<dbReference type="PANTHER" id="PTHR33969:SF2">
    <property type="entry name" value="SEGREGATION AND CONDENSATION PROTEIN A"/>
    <property type="match status" value="1"/>
</dbReference>
<dbReference type="Pfam" id="PF02616">
    <property type="entry name" value="SMC_ScpA"/>
    <property type="match status" value="1"/>
</dbReference>
<evidence type="ECO:0000255" key="1">
    <source>
        <dbReference type="HAMAP-Rule" id="MF_01805"/>
    </source>
</evidence>
<proteinExistence type="inferred from homology"/>
<gene>
    <name evidence="1" type="primary">scpA</name>
    <name type="ordered locus">SAK_1610</name>
</gene>
<feature type="chain" id="PRO_1000069978" description="Segregation and condensation protein A">
    <location>
        <begin position="1"/>
        <end position="235"/>
    </location>
</feature>
<keyword id="KW-0131">Cell cycle</keyword>
<keyword id="KW-0132">Cell division</keyword>
<keyword id="KW-0159">Chromosome partition</keyword>
<keyword id="KW-0963">Cytoplasm</keyword>
<sequence length="235" mass="27717">MDIKLKDFEGPLDLLLHLVSKYEVDIYDVPIVEVIEQYLAYIATLQAMRLEVAGEYMLMASQLMLIKSRNLLPKVVESNPIEDDPEMELLSQLEEYRRFKVLSEELANQHQERAKYFSKPKQEVIFEDAILLHDKSVMDLFLTFSQMMSQKQKELSNSQTVIEKEDYRIEDMMIVIERHFNLKKKTTLQEVFADCQTKSEMITLFLAMLELIKLHQITVEQDSNFSQVILRKEEK</sequence>
<accession>Q3JZU0</accession>